<gene>
    <name evidence="1" type="primary">rplX</name>
    <name type="ordered locus">Ajs_0392</name>
</gene>
<evidence type="ECO:0000255" key="1">
    <source>
        <dbReference type="HAMAP-Rule" id="MF_01326"/>
    </source>
</evidence>
<evidence type="ECO:0000305" key="2"/>
<reference key="1">
    <citation type="submission" date="2006-12" db="EMBL/GenBank/DDBJ databases">
        <title>Complete sequence of chromosome 1 of Acidovorax sp. JS42.</title>
        <authorList>
            <person name="Copeland A."/>
            <person name="Lucas S."/>
            <person name="Lapidus A."/>
            <person name="Barry K."/>
            <person name="Detter J.C."/>
            <person name="Glavina del Rio T."/>
            <person name="Dalin E."/>
            <person name="Tice H."/>
            <person name="Pitluck S."/>
            <person name="Chertkov O."/>
            <person name="Brettin T."/>
            <person name="Bruce D."/>
            <person name="Han C."/>
            <person name="Tapia R."/>
            <person name="Gilna P."/>
            <person name="Schmutz J."/>
            <person name="Larimer F."/>
            <person name="Land M."/>
            <person name="Hauser L."/>
            <person name="Kyrpides N."/>
            <person name="Kim E."/>
            <person name="Stahl D."/>
            <person name="Richardson P."/>
        </authorList>
    </citation>
    <scope>NUCLEOTIDE SEQUENCE [LARGE SCALE GENOMIC DNA]</scope>
    <source>
        <strain>JS42</strain>
    </source>
</reference>
<comment type="function">
    <text evidence="1">One of two assembly initiator proteins, it binds directly to the 5'-end of the 23S rRNA, where it nucleates assembly of the 50S subunit.</text>
</comment>
<comment type="function">
    <text evidence="1">One of the proteins that surrounds the polypeptide exit tunnel on the outside of the subunit.</text>
</comment>
<comment type="subunit">
    <text evidence="1">Part of the 50S ribosomal subunit.</text>
</comment>
<comment type="similarity">
    <text evidence="1">Belongs to the universal ribosomal protein uL24 family.</text>
</comment>
<accession>A1W319</accession>
<keyword id="KW-0687">Ribonucleoprotein</keyword>
<keyword id="KW-0689">Ribosomal protein</keyword>
<keyword id="KW-0694">RNA-binding</keyword>
<keyword id="KW-0699">rRNA-binding</keyword>
<organism>
    <name type="scientific">Acidovorax sp. (strain JS42)</name>
    <dbReference type="NCBI Taxonomy" id="232721"/>
    <lineage>
        <taxon>Bacteria</taxon>
        <taxon>Pseudomonadati</taxon>
        <taxon>Pseudomonadota</taxon>
        <taxon>Betaproteobacteria</taxon>
        <taxon>Burkholderiales</taxon>
        <taxon>Comamonadaceae</taxon>
        <taxon>Acidovorax</taxon>
    </lineage>
</organism>
<feature type="chain" id="PRO_1000052172" description="Large ribosomal subunit protein uL24">
    <location>
        <begin position="1"/>
        <end position="106"/>
    </location>
</feature>
<name>RL24_ACISJ</name>
<proteinExistence type="inferred from homology"/>
<sequence length="106" mass="11357">MNKIRKGDEVIVLTGRDKGKRGTVSLRKDDSHLVIEGINLVKKHVKPNPMKGTTGGIVEKAMPIHQSNVAIFNAATGKADRVGIKVQADGTRVRVFKSSGAEIKAA</sequence>
<protein>
    <recommendedName>
        <fullName evidence="1">Large ribosomal subunit protein uL24</fullName>
    </recommendedName>
    <alternativeName>
        <fullName evidence="2">50S ribosomal protein L24</fullName>
    </alternativeName>
</protein>
<dbReference type="EMBL" id="CP000539">
    <property type="protein sequence ID" value="ABM40644.1"/>
    <property type="molecule type" value="Genomic_DNA"/>
</dbReference>
<dbReference type="SMR" id="A1W319"/>
<dbReference type="STRING" id="232721.Ajs_0392"/>
<dbReference type="KEGG" id="ajs:Ajs_0392"/>
<dbReference type="eggNOG" id="COG0198">
    <property type="taxonomic scope" value="Bacteria"/>
</dbReference>
<dbReference type="HOGENOM" id="CLU_093315_2_2_4"/>
<dbReference type="Proteomes" id="UP000000645">
    <property type="component" value="Chromosome"/>
</dbReference>
<dbReference type="GO" id="GO:1990904">
    <property type="term" value="C:ribonucleoprotein complex"/>
    <property type="evidence" value="ECO:0007669"/>
    <property type="project" value="UniProtKB-KW"/>
</dbReference>
<dbReference type="GO" id="GO:0005840">
    <property type="term" value="C:ribosome"/>
    <property type="evidence" value="ECO:0007669"/>
    <property type="project" value="UniProtKB-KW"/>
</dbReference>
<dbReference type="GO" id="GO:0019843">
    <property type="term" value="F:rRNA binding"/>
    <property type="evidence" value="ECO:0007669"/>
    <property type="project" value="UniProtKB-UniRule"/>
</dbReference>
<dbReference type="GO" id="GO:0003735">
    <property type="term" value="F:structural constituent of ribosome"/>
    <property type="evidence" value="ECO:0007669"/>
    <property type="project" value="InterPro"/>
</dbReference>
<dbReference type="GO" id="GO:0006412">
    <property type="term" value="P:translation"/>
    <property type="evidence" value="ECO:0007669"/>
    <property type="project" value="UniProtKB-UniRule"/>
</dbReference>
<dbReference type="CDD" id="cd06089">
    <property type="entry name" value="KOW_RPL26"/>
    <property type="match status" value="1"/>
</dbReference>
<dbReference type="FunFam" id="2.30.30.30:FF:000004">
    <property type="entry name" value="50S ribosomal protein L24"/>
    <property type="match status" value="1"/>
</dbReference>
<dbReference type="Gene3D" id="2.30.30.30">
    <property type="match status" value="1"/>
</dbReference>
<dbReference type="HAMAP" id="MF_01326_B">
    <property type="entry name" value="Ribosomal_uL24_B"/>
    <property type="match status" value="1"/>
</dbReference>
<dbReference type="InterPro" id="IPR005824">
    <property type="entry name" value="KOW"/>
</dbReference>
<dbReference type="InterPro" id="IPR014722">
    <property type="entry name" value="Rib_uL2_dom2"/>
</dbReference>
<dbReference type="InterPro" id="IPR003256">
    <property type="entry name" value="Ribosomal_uL24"/>
</dbReference>
<dbReference type="InterPro" id="IPR005825">
    <property type="entry name" value="Ribosomal_uL24_CS"/>
</dbReference>
<dbReference type="InterPro" id="IPR041988">
    <property type="entry name" value="Ribosomal_uL24_KOW"/>
</dbReference>
<dbReference type="InterPro" id="IPR008991">
    <property type="entry name" value="Translation_prot_SH3-like_sf"/>
</dbReference>
<dbReference type="NCBIfam" id="TIGR01079">
    <property type="entry name" value="rplX_bact"/>
    <property type="match status" value="1"/>
</dbReference>
<dbReference type="PANTHER" id="PTHR12903">
    <property type="entry name" value="MITOCHONDRIAL RIBOSOMAL PROTEIN L24"/>
    <property type="match status" value="1"/>
</dbReference>
<dbReference type="Pfam" id="PF00467">
    <property type="entry name" value="KOW"/>
    <property type="match status" value="1"/>
</dbReference>
<dbReference type="Pfam" id="PF17136">
    <property type="entry name" value="ribosomal_L24"/>
    <property type="match status" value="1"/>
</dbReference>
<dbReference type="SMART" id="SM00739">
    <property type="entry name" value="KOW"/>
    <property type="match status" value="1"/>
</dbReference>
<dbReference type="SUPFAM" id="SSF50104">
    <property type="entry name" value="Translation proteins SH3-like domain"/>
    <property type="match status" value="1"/>
</dbReference>
<dbReference type="PROSITE" id="PS01108">
    <property type="entry name" value="RIBOSOMAL_L24"/>
    <property type="match status" value="1"/>
</dbReference>